<name>ELAC_TRIVU</name>
<organism>
    <name type="scientific">Trichosurus vulpecula</name>
    <name type="common">Brush-tailed possum</name>
    <dbReference type="NCBI Taxonomy" id="9337"/>
    <lineage>
        <taxon>Eukaryota</taxon>
        <taxon>Metazoa</taxon>
        <taxon>Chordata</taxon>
        <taxon>Craniata</taxon>
        <taxon>Vertebrata</taxon>
        <taxon>Euteleostomi</taxon>
        <taxon>Mammalia</taxon>
        <taxon>Metatheria</taxon>
        <taxon>Diprotodontia</taxon>
        <taxon>Phalangeridae</taxon>
        <taxon>Trichosurus</taxon>
    </lineage>
</organism>
<feature type="signal peptide" evidence="4">
    <location>
        <begin position="1"/>
        <end position="20"/>
    </location>
</feature>
<feature type="chain" id="PRO_0000016878" description="Early lactation protein">
    <location>
        <begin position="21"/>
        <end position="102"/>
    </location>
</feature>
<feature type="domain" description="BPTI/Kunitz inhibitor" evidence="3">
    <location>
        <begin position="43"/>
        <end position="93"/>
    </location>
</feature>
<feature type="site" description="Reactive bond" evidence="1">
    <location>
        <begin position="53"/>
        <end position="54"/>
    </location>
</feature>
<feature type="glycosylation site" description="N-linked (GlcNAc...) asparagine" evidence="2">
    <location>
        <position position="34"/>
    </location>
</feature>
<feature type="glycosylation site" description="N-linked (GlcNAc...) asparagine" evidence="2">
    <location>
        <position position="62"/>
    </location>
</feature>
<feature type="disulfide bond" evidence="3">
    <location>
        <begin position="43"/>
        <end position="93"/>
    </location>
</feature>
<feature type="disulfide bond" evidence="3">
    <location>
        <begin position="52"/>
        <end position="76"/>
    </location>
</feature>
<feature type="disulfide bond" evidence="3">
    <location>
        <begin position="68"/>
        <end position="89"/>
    </location>
</feature>
<sequence length="102" mass="11407">MKFTIIALCLALSLVGMTSSEKLLDRIRANSLENLSRLVPSLCLLPSGRGNCDSQILRYFYNATSHTCEVFLYSGCNGNGNNFDSLECCLKTCRLNKYRNNN</sequence>
<dbReference type="EMBL" id="U34208">
    <property type="protein sequence ID" value="AAB08977.1"/>
    <property type="molecule type" value="mRNA"/>
</dbReference>
<dbReference type="PIR" id="S69288">
    <property type="entry name" value="S69288"/>
</dbReference>
<dbReference type="SMR" id="Q29143"/>
<dbReference type="GlyCosmos" id="Q29143">
    <property type="glycosylation" value="2 sites, No reported glycans"/>
</dbReference>
<dbReference type="GO" id="GO:0005615">
    <property type="term" value="C:extracellular space"/>
    <property type="evidence" value="ECO:0007669"/>
    <property type="project" value="TreeGrafter"/>
</dbReference>
<dbReference type="GO" id="GO:0004867">
    <property type="term" value="F:serine-type endopeptidase inhibitor activity"/>
    <property type="evidence" value="ECO:0007669"/>
    <property type="project" value="UniProtKB-KW"/>
</dbReference>
<dbReference type="GO" id="GO:0007595">
    <property type="term" value="P:lactation"/>
    <property type="evidence" value="ECO:0007669"/>
    <property type="project" value="UniProtKB-KW"/>
</dbReference>
<dbReference type="CDD" id="cd22632">
    <property type="entry name" value="Kunitz_ELP-like"/>
    <property type="match status" value="1"/>
</dbReference>
<dbReference type="FunFam" id="4.10.410.10:FF:000011">
    <property type="entry name" value="Tissue factor pathway inhibitor"/>
    <property type="match status" value="1"/>
</dbReference>
<dbReference type="Gene3D" id="4.10.410.10">
    <property type="entry name" value="Pancreatic trypsin inhibitor Kunitz domain"/>
    <property type="match status" value="1"/>
</dbReference>
<dbReference type="InterPro" id="IPR002223">
    <property type="entry name" value="Kunitz_BPTI"/>
</dbReference>
<dbReference type="InterPro" id="IPR036880">
    <property type="entry name" value="Kunitz_BPTI_sf"/>
</dbReference>
<dbReference type="InterPro" id="IPR020901">
    <property type="entry name" value="Prtase_inh_Kunz-CS"/>
</dbReference>
<dbReference type="InterPro" id="IPR050098">
    <property type="entry name" value="TFPI/VKTCI-like"/>
</dbReference>
<dbReference type="PANTHER" id="PTHR10083:SF380">
    <property type="entry name" value="COLOSTRUM TRYPSIN INHIBITOR"/>
    <property type="match status" value="1"/>
</dbReference>
<dbReference type="PANTHER" id="PTHR10083">
    <property type="entry name" value="KUNITZ-TYPE PROTEASE INHIBITOR-RELATED"/>
    <property type="match status" value="1"/>
</dbReference>
<dbReference type="Pfam" id="PF00014">
    <property type="entry name" value="Kunitz_BPTI"/>
    <property type="match status" value="1"/>
</dbReference>
<dbReference type="PRINTS" id="PR00759">
    <property type="entry name" value="BASICPTASE"/>
</dbReference>
<dbReference type="SMART" id="SM00131">
    <property type="entry name" value="KU"/>
    <property type="match status" value="1"/>
</dbReference>
<dbReference type="SUPFAM" id="SSF57362">
    <property type="entry name" value="BPTI-like"/>
    <property type="match status" value="1"/>
</dbReference>
<dbReference type="PROSITE" id="PS00280">
    <property type="entry name" value="BPTI_KUNITZ_1"/>
    <property type="match status" value="1"/>
</dbReference>
<dbReference type="PROSITE" id="PS50279">
    <property type="entry name" value="BPTI_KUNITZ_2"/>
    <property type="match status" value="1"/>
</dbReference>
<reference key="1">
    <citation type="journal article" date="1996" name="Arch. Biochem. Biophys.">
        <title>A novel marsupial protein expressed by the mammary gland only during the early lactation and related to the Kunitz proteinase inhibitors.</title>
        <authorList>
            <person name="Piotte C.P."/>
            <person name="Grigor M.R."/>
        </authorList>
    </citation>
    <scope>NUCLEOTIDE SEQUENCE [MRNA]</scope>
    <scope>PROTEIN SEQUENCE OF 21-30</scope>
    <source>
        <tissue>Mammary gland</tissue>
    </source>
</reference>
<protein>
    <recommendedName>
        <fullName>Early lactation protein</fullName>
    </recommendedName>
</protein>
<evidence type="ECO:0000250" key="1"/>
<evidence type="ECO:0000255" key="2"/>
<evidence type="ECO:0000255" key="3">
    <source>
        <dbReference type="PROSITE-ProRule" id="PRU00031"/>
    </source>
</evidence>
<evidence type="ECO:0000269" key="4">
    <source>
    </source>
</evidence>
<accession>Q29143</accession>
<comment type="subcellular location">
    <subcellularLocation>
        <location>Secreted</location>
    </subcellularLocation>
</comment>
<comment type="tissue specificity">
    <text>Expressed by the mammary gland.</text>
</comment>
<comment type="developmental stage">
    <text>Expressed only during early lactation phase.</text>
</comment>
<comment type="PTM">
    <text>N-glycosylated.</text>
</comment>
<gene>
    <name type="primary">ELP</name>
</gene>
<proteinExistence type="evidence at protein level"/>
<keyword id="KW-0903">Direct protein sequencing</keyword>
<keyword id="KW-1015">Disulfide bond</keyword>
<keyword id="KW-0325">Glycoprotein</keyword>
<keyword id="KW-0421">Lactation</keyword>
<keyword id="KW-0494">Milk protein</keyword>
<keyword id="KW-0646">Protease inhibitor</keyword>
<keyword id="KW-0964">Secreted</keyword>
<keyword id="KW-0722">Serine protease inhibitor</keyword>
<keyword id="KW-0732">Signal</keyword>